<organism>
    <name type="scientific">Xylella fastidiosa (strain M23)</name>
    <dbReference type="NCBI Taxonomy" id="405441"/>
    <lineage>
        <taxon>Bacteria</taxon>
        <taxon>Pseudomonadati</taxon>
        <taxon>Pseudomonadota</taxon>
        <taxon>Gammaproteobacteria</taxon>
        <taxon>Lysobacterales</taxon>
        <taxon>Lysobacteraceae</taxon>
        <taxon>Xylella</taxon>
    </lineage>
</organism>
<evidence type="ECO:0000255" key="1">
    <source>
        <dbReference type="HAMAP-Rule" id="MF_00362"/>
    </source>
</evidence>
<evidence type="ECO:0000305" key="2"/>
<feature type="chain" id="PRO_1000121035" description="Large ribosomal subunit protein uL10">
    <location>
        <begin position="1"/>
        <end position="175"/>
    </location>
</feature>
<proteinExistence type="inferred from homology"/>
<name>RL10_XYLF2</name>
<reference key="1">
    <citation type="journal article" date="2010" name="J. Bacteriol.">
        <title>Whole genome sequences of two Xylella fastidiosa strains (M12 and M23) causing almond leaf scorch disease in California.</title>
        <authorList>
            <person name="Chen J."/>
            <person name="Xie G."/>
            <person name="Han S."/>
            <person name="Chertkov O."/>
            <person name="Sims D."/>
            <person name="Civerolo E.L."/>
        </authorList>
    </citation>
    <scope>NUCLEOTIDE SEQUENCE [LARGE SCALE GENOMIC DNA]</scope>
    <source>
        <strain>M23</strain>
    </source>
</reference>
<accession>B2IA70</accession>
<protein>
    <recommendedName>
        <fullName evidence="1">Large ribosomal subunit protein uL10</fullName>
    </recommendedName>
    <alternativeName>
        <fullName evidence="2">50S ribosomal protein L10</fullName>
    </alternativeName>
</protein>
<gene>
    <name evidence="1" type="primary">rplJ</name>
    <name type="ordered locus">XfasM23_2108</name>
</gene>
<dbReference type="EMBL" id="CP001011">
    <property type="protein sequence ID" value="ACB93506.1"/>
    <property type="molecule type" value="Genomic_DNA"/>
</dbReference>
<dbReference type="RefSeq" id="WP_004090729.1">
    <property type="nucleotide sequence ID" value="NC_010577.1"/>
</dbReference>
<dbReference type="SMR" id="B2IA70"/>
<dbReference type="GeneID" id="93905864"/>
<dbReference type="KEGG" id="xfn:XfasM23_2108"/>
<dbReference type="HOGENOM" id="CLU_092227_0_1_6"/>
<dbReference type="Proteomes" id="UP000001698">
    <property type="component" value="Chromosome"/>
</dbReference>
<dbReference type="GO" id="GO:0015934">
    <property type="term" value="C:large ribosomal subunit"/>
    <property type="evidence" value="ECO:0007669"/>
    <property type="project" value="InterPro"/>
</dbReference>
<dbReference type="GO" id="GO:0070180">
    <property type="term" value="F:large ribosomal subunit rRNA binding"/>
    <property type="evidence" value="ECO:0007669"/>
    <property type="project" value="UniProtKB-UniRule"/>
</dbReference>
<dbReference type="GO" id="GO:0003735">
    <property type="term" value="F:structural constituent of ribosome"/>
    <property type="evidence" value="ECO:0007669"/>
    <property type="project" value="InterPro"/>
</dbReference>
<dbReference type="GO" id="GO:0006412">
    <property type="term" value="P:translation"/>
    <property type="evidence" value="ECO:0007669"/>
    <property type="project" value="UniProtKB-UniRule"/>
</dbReference>
<dbReference type="CDD" id="cd05797">
    <property type="entry name" value="Ribosomal_L10"/>
    <property type="match status" value="1"/>
</dbReference>
<dbReference type="Gene3D" id="3.30.70.1730">
    <property type="match status" value="1"/>
</dbReference>
<dbReference type="HAMAP" id="MF_00362">
    <property type="entry name" value="Ribosomal_uL10"/>
    <property type="match status" value="1"/>
</dbReference>
<dbReference type="InterPro" id="IPR001790">
    <property type="entry name" value="Ribosomal_uL10"/>
</dbReference>
<dbReference type="InterPro" id="IPR043141">
    <property type="entry name" value="Ribosomal_uL10-like_sf"/>
</dbReference>
<dbReference type="InterPro" id="IPR022973">
    <property type="entry name" value="Ribosomal_uL10_bac"/>
</dbReference>
<dbReference type="InterPro" id="IPR047865">
    <property type="entry name" value="Ribosomal_uL10_bac_type"/>
</dbReference>
<dbReference type="InterPro" id="IPR002363">
    <property type="entry name" value="Ribosomal_uL10_CS_bac"/>
</dbReference>
<dbReference type="NCBIfam" id="NF000955">
    <property type="entry name" value="PRK00099.1-1"/>
    <property type="match status" value="1"/>
</dbReference>
<dbReference type="PANTHER" id="PTHR11560">
    <property type="entry name" value="39S RIBOSOMAL PROTEIN L10, MITOCHONDRIAL"/>
    <property type="match status" value="1"/>
</dbReference>
<dbReference type="Pfam" id="PF00466">
    <property type="entry name" value="Ribosomal_L10"/>
    <property type="match status" value="1"/>
</dbReference>
<dbReference type="SUPFAM" id="SSF160369">
    <property type="entry name" value="Ribosomal protein L10-like"/>
    <property type="match status" value="1"/>
</dbReference>
<dbReference type="PROSITE" id="PS01109">
    <property type="entry name" value="RIBOSOMAL_L10"/>
    <property type="match status" value="1"/>
</dbReference>
<sequence>MALNVFQKQEVVKELAGVATKAHSLIVAEYAGITVPQMTAMRKQARESGVYLKVVKNKLAARALGDTEYAVIKEKLIGPLLYAFSLEDPGAAGRLIKEFSKKHDKLKSKAVSLGGVLYPAGHVDVLASLPTRLQALAMLARVLSEPVTLFARAIKAMADDKSETFAVSSPETSEA</sequence>
<keyword id="KW-0687">Ribonucleoprotein</keyword>
<keyword id="KW-0689">Ribosomal protein</keyword>
<keyword id="KW-0694">RNA-binding</keyword>
<keyword id="KW-0699">rRNA-binding</keyword>
<comment type="function">
    <text evidence="1">Forms part of the ribosomal stalk, playing a central role in the interaction of the ribosome with GTP-bound translation factors.</text>
</comment>
<comment type="subunit">
    <text evidence="1">Part of the ribosomal stalk of the 50S ribosomal subunit. The N-terminus interacts with L11 and the large rRNA to form the base of the stalk. The C-terminus forms an elongated spine to which L12 dimers bind in a sequential fashion forming a multimeric L10(L12)X complex.</text>
</comment>
<comment type="similarity">
    <text evidence="1">Belongs to the universal ribosomal protein uL10 family.</text>
</comment>